<comment type="function">
    <text evidence="1">Binds the lower part of the 30S subunit head. Binds mRNA in the 70S ribosome, positioning it for translation.</text>
</comment>
<comment type="subunit">
    <text evidence="1">Part of the 30S ribosomal subunit. Forms a tight complex with proteins S10 and S14.</text>
</comment>
<comment type="similarity">
    <text evidence="1">Belongs to the universal ribosomal protein uS3 family.</text>
</comment>
<evidence type="ECO:0000255" key="1">
    <source>
        <dbReference type="HAMAP-Rule" id="MF_01309"/>
    </source>
</evidence>
<evidence type="ECO:0000256" key="2">
    <source>
        <dbReference type="SAM" id="MobiDB-lite"/>
    </source>
</evidence>
<evidence type="ECO:0000305" key="3"/>
<name>RS3_BORPA</name>
<gene>
    <name evidence="1" type="primary">rpsC</name>
    <name type="ordered locus">BPP0035</name>
</gene>
<organism>
    <name type="scientific">Bordetella parapertussis (strain 12822 / ATCC BAA-587 / NCTC 13253)</name>
    <dbReference type="NCBI Taxonomy" id="257311"/>
    <lineage>
        <taxon>Bacteria</taxon>
        <taxon>Pseudomonadati</taxon>
        <taxon>Pseudomonadota</taxon>
        <taxon>Betaproteobacteria</taxon>
        <taxon>Burkholderiales</taxon>
        <taxon>Alcaligenaceae</taxon>
        <taxon>Bordetella</taxon>
    </lineage>
</organism>
<reference key="1">
    <citation type="journal article" date="2003" name="Nat. Genet.">
        <title>Comparative analysis of the genome sequences of Bordetella pertussis, Bordetella parapertussis and Bordetella bronchiseptica.</title>
        <authorList>
            <person name="Parkhill J."/>
            <person name="Sebaihia M."/>
            <person name="Preston A."/>
            <person name="Murphy L.D."/>
            <person name="Thomson N.R."/>
            <person name="Harris D.E."/>
            <person name="Holden M.T.G."/>
            <person name="Churcher C.M."/>
            <person name="Bentley S.D."/>
            <person name="Mungall K.L."/>
            <person name="Cerdeno-Tarraga A.-M."/>
            <person name="Temple L."/>
            <person name="James K.D."/>
            <person name="Harris B."/>
            <person name="Quail M.A."/>
            <person name="Achtman M."/>
            <person name="Atkin R."/>
            <person name="Baker S."/>
            <person name="Basham D."/>
            <person name="Bason N."/>
            <person name="Cherevach I."/>
            <person name="Chillingworth T."/>
            <person name="Collins M."/>
            <person name="Cronin A."/>
            <person name="Davis P."/>
            <person name="Doggett J."/>
            <person name="Feltwell T."/>
            <person name="Goble A."/>
            <person name="Hamlin N."/>
            <person name="Hauser H."/>
            <person name="Holroyd S."/>
            <person name="Jagels K."/>
            <person name="Leather S."/>
            <person name="Moule S."/>
            <person name="Norberczak H."/>
            <person name="O'Neil S."/>
            <person name="Ormond D."/>
            <person name="Price C."/>
            <person name="Rabbinowitsch E."/>
            <person name="Rutter S."/>
            <person name="Sanders M."/>
            <person name="Saunders D."/>
            <person name="Seeger K."/>
            <person name="Sharp S."/>
            <person name="Simmonds M."/>
            <person name="Skelton J."/>
            <person name="Squares R."/>
            <person name="Squares S."/>
            <person name="Stevens K."/>
            <person name="Unwin L."/>
            <person name="Whitehead S."/>
            <person name="Barrell B.G."/>
            <person name="Maskell D.J."/>
        </authorList>
    </citation>
    <scope>NUCLEOTIDE SEQUENCE [LARGE SCALE GENOMIC DNA]</scope>
    <source>
        <strain>12822 / ATCC BAA-587 / NCTC 13253</strain>
    </source>
</reference>
<protein>
    <recommendedName>
        <fullName evidence="1">Small ribosomal subunit protein uS3</fullName>
    </recommendedName>
    <alternativeName>
        <fullName evidence="3">30S ribosomal protein S3</fullName>
    </alternativeName>
</protein>
<dbReference type="EMBL" id="BX640423">
    <property type="protein sequence ID" value="CAE39776.1"/>
    <property type="molecule type" value="Genomic_DNA"/>
</dbReference>
<dbReference type="RefSeq" id="WP_003806910.1">
    <property type="nucleotide sequence ID" value="NC_002928.3"/>
</dbReference>
<dbReference type="SMR" id="Q7W2F0"/>
<dbReference type="GeneID" id="93206264"/>
<dbReference type="KEGG" id="bpa:BPP0035"/>
<dbReference type="HOGENOM" id="CLU_058591_0_2_4"/>
<dbReference type="Proteomes" id="UP000001421">
    <property type="component" value="Chromosome"/>
</dbReference>
<dbReference type="GO" id="GO:0022627">
    <property type="term" value="C:cytosolic small ribosomal subunit"/>
    <property type="evidence" value="ECO:0007669"/>
    <property type="project" value="TreeGrafter"/>
</dbReference>
<dbReference type="GO" id="GO:0003729">
    <property type="term" value="F:mRNA binding"/>
    <property type="evidence" value="ECO:0007669"/>
    <property type="project" value="UniProtKB-UniRule"/>
</dbReference>
<dbReference type="GO" id="GO:0019843">
    <property type="term" value="F:rRNA binding"/>
    <property type="evidence" value="ECO:0007669"/>
    <property type="project" value="UniProtKB-UniRule"/>
</dbReference>
<dbReference type="GO" id="GO:0003735">
    <property type="term" value="F:structural constituent of ribosome"/>
    <property type="evidence" value="ECO:0007669"/>
    <property type="project" value="InterPro"/>
</dbReference>
<dbReference type="GO" id="GO:0006412">
    <property type="term" value="P:translation"/>
    <property type="evidence" value="ECO:0007669"/>
    <property type="project" value="UniProtKB-UniRule"/>
</dbReference>
<dbReference type="CDD" id="cd02412">
    <property type="entry name" value="KH-II_30S_S3"/>
    <property type="match status" value="1"/>
</dbReference>
<dbReference type="FunFam" id="3.30.1140.32:FF:000006">
    <property type="entry name" value="30S ribosomal protein S3"/>
    <property type="match status" value="1"/>
</dbReference>
<dbReference type="FunFam" id="3.30.300.20:FF:000001">
    <property type="entry name" value="30S ribosomal protein S3"/>
    <property type="match status" value="1"/>
</dbReference>
<dbReference type="Gene3D" id="3.30.300.20">
    <property type="match status" value="1"/>
</dbReference>
<dbReference type="Gene3D" id="3.30.1140.32">
    <property type="entry name" value="Ribosomal protein S3, C-terminal domain"/>
    <property type="match status" value="1"/>
</dbReference>
<dbReference type="HAMAP" id="MF_01309_B">
    <property type="entry name" value="Ribosomal_uS3_B"/>
    <property type="match status" value="1"/>
</dbReference>
<dbReference type="InterPro" id="IPR004087">
    <property type="entry name" value="KH_dom"/>
</dbReference>
<dbReference type="InterPro" id="IPR015946">
    <property type="entry name" value="KH_dom-like_a/b"/>
</dbReference>
<dbReference type="InterPro" id="IPR004044">
    <property type="entry name" value="KH_dom_type_2"/>
</dbReference>
<dbReference type="InterPro" id="IPR009019">
    <property type="entry name" value="KH_sf_prok-type"/>
</dbReference>
<dbReference type="InterPro" id="IPR036419">
    <property type="entry name" value="Ribosomal_S3_C_sf"/>
</dbReference>
<dbReference type="InterPro" id="IPR005704">
    <property type="entry name" value="Ribosomal_uS3_bac-typ"/>
</dbReference>
<dbReference type="InterPro" id="IPR001351">
    <property type="entry name" value="Ribosomal_uS3_C"/>
</dbReference>
<dbReference type="InterPro" id="IPR018280">
    <property type="entry name" value="Ribosomal_uS3_CS"/>
</dbReference>
<dbReference type="NCBIfam" id="TIGR01009">
    <property type="entry name" value="rpsC_bact"/>
    <property type="match status" value="1"/>
</dbReference>
<dbReference type="PANTHER" id="PTHR11760">
    <property type="entry name" value="30S/40S RIBOSOMAL PROTEIN S3"/>
    <property type="match status" value="1"/>
</dbReference>
<dbReference type="PANTHER" id="PTHR11760:SF19">
    <property type="entry name" value="SMALL RIBOSOMAL SUBUNIT PROTEIN US3C"/>
    <property type="match status" value="1"/>
</dbReference>
<dbReference type="Pfam" id="PF07650">
    <property type="entry name" value="KH_2"/>
    <property type="match status" value="1"/>
</dbReference>
<dbReference type="Pfam" id="PF00189">
    <property type="entry name" value="Ribosomal_S3_C"/>
    <property type="match status" value="1"/>
</dbReference>
<dbReference type="SMART" id="SM00322">
    <property type="entry name" value="KH"/>
    <property type="match status" value="1"/>
</dbReference>
<dbReference type="SUPFAM" id="SSF54814">
    <property type="entry name" value="Prokaryotic type KH domain (KH-domain type II)"/>
    <property type="match status" value="1"/>
</dbReference>
<dbReference type="SUPFAM" id="SSF54821">
    <property type="entry name" value="Ribosomal protein S3 C-terminal domain"/>
    <property type="match status" value="1"/>
</dbReference>
<dbReference type="PROSITE" id="PS50823">
    <property type="entry name" value="KH_TYPE_2"/>
    <property type="match status" value="1"/>
</dbReference>
<dbReference type="PROSITE" id="PS00548">
    <property type="entry name" value="RIBOSOMAL_S3"/>
    <property type="match status" value="1"/>
</dbReference>
<accession>Q7W2F0</accession>
<keyword id="KW-0687">Ribonucleoprotein</keyword>
<keyword id="KW-0689">Ribosomal protein</keyword>
<keyword id="KW-0694">RNA-binding</keyword>
<keyword id="KW-0699">rRNA-binding</keyword>
<feature type="chain" id="PRO_0000130082" description="Small ribosomal subunit protein uS3">
    <location>
        <begin position="1"/>
        <end position="263"/>
    </location>
</feature>
<feature type="domain" description="KH type-2" evidence="1">
    <location>
        <begin position="39"/>
        <end position="107"/>
    </location>
</feature>
<feature type="region of interest" description="Disordered" evidence="2">
    <location>
        <begin position="211"/>
        <end position="263"/>
    </location>
</feature>
<feature type="compositionally biased region" description="Basic and acidic residues" evidence="2">
    <location>
        <begin position="219"/>
        <end position="240"/>
    </location>
</feature>
<proteinExistence type="inferred from homology"/>
<sequence length="263" mass="29456">MGQKIHPTGFRLAVTRNWTSRWFADDKAFGTMLAEDIRVREYLKKKLKSASVGRVIIERPAKNARITVYSARPGVVIGKRGEDIENLKADLQRLMGVPVHVNIEEIRKPETDAQLIADSISQQLEKRIMFRRAMKRAMQNAMRLGAQGIKIMSSGRLNGIEIARTEWYREGRVPLHTLKANIDYGTSEAHTTYGVIGIKVWVYKGDMLANGELPPEAATPREEERRPRRAPRGDRPDGARTGRPGGRGRGPRKADAAPAPEGE</sequence>